<feature type="chain" id="PRO_0000185721" description="Cellular tumor antigen p53">
    <location>
        <begin position="1"/>
        <end position="352"/>
    </location>
</feature>
<feature type="DNA-binding region" evidence="1">
    <location>
        <begin position="87"/>
        <end position="273"/>
    </location>
</feature>
<feature type="region of interest" description="Transcription activation (acidic)">
    <location>
        <begin position="1"/>
        <end position="48"/>
    </location>
</feature>
<feature type="region of interest" description="Interaction with DNA" evidence="1">
    <location>
        <begin position="254"/>
        <end position="261"/>
    </location>
</feature>
<feature type="region of interest" description="Disordered" evidence="3">
    <location>
        <begin position="262"/>
        <end position="303"/>
    </location>
</feature>
<feature type="region of interest" description="Oligomerization">
    <location>
        <begin position="302"/>
        <end position="331"/>
    </location>
</feature>
<feature type="region of interest" description="Disordered" evidence="3">
    <location>
        <begin position="330"/>
        <end position="352"/>
    </location>
</feature>
<feature type="region of interest" description="Basic (repression of DNA-binding)">
    <location>
        <begin position="334"/>
        <end position="350"/>
    </location>
</feature>
<feature type="short sequence motif" description="Bipartite nuclear localization signal" evidence="1">
    <location>
        <begin position="276"/>
        <end position="291"/>
    </location>
</feature>
<feature type="short sequence motif" description="Nuclear export signal" evidence="1">
    <location>
        <begin position="316"/>
        <end position="327"/>
    </location>
</feature>
<feature type="compositionally biased region" description="Basic and acidic residues" evidence="3">
    <location>
        <begin position="262"/>
        <end position="271"/>
    </location>
</feature>
<feature type="binding site" evidence="1">
    <location>
        <position position="161"/>
    </location>
    <ligand>
        <name>Zn(2+)</name>
        <dbReference type="ChEBI" id="CHEBI:29105"/>
    </ligand>
</feature>
<feature type="binding site" evidence="1">
    <location>
        <position position="164"/>
    </location>
    <ligand>
        <name>Zn(2+)</name>
        <dbReference type="ChEBI" id="CHEBI:29105"/>
    </ligand>
</feature>
<feature type="binding site" evidence="1">
    <location>
        <position position="220"/>
    </location>
    <ligand>
        <name>Zn(2+)</name>
        <dbReference type="ChEBI" id="CHEBI:29105"/>
    </ligand>
</feature>
<feature type="binding site" evidence="1">
    <location>
        <position position="224"/>
    </location>
    <ligand>
        <name>Zn(2+)</name>
        <dbReference type="ChEBI" id="CHEBI:29105"/>
    </ligand>
</feature>
<feature type="site" description="Interaction with DNA" evidence="1">
    <location>
        <position position="105"/>
    </location>
</feature>
<feature type="modified residue" description="Phosphoserine" evidence="1">
    <location>
        <position position="351"/>
    </location>
</feature>
<feature type="sequence variant" evidence="4">
    <original>S</original>
    <variation>T</variation>
    <location>
        <position position="91"/>
    </location>
</feature>
<feature type="sequence conflict" description="In Ref. 1; AAC60146." evidence="5" ref="1">
    <location>
        <position position="22"/>
    </location>
</feature>
<keyword id="KW-0010">Activator</keyword>
<keyword id="KW-0053">Apoptosis</keyword>
<keyword id="KW-0131">Cell cycle</keyword>
<keyword id="KW-0963">Cytoplasm</keyword>
<keyword id="KW-0238">DNA-binding</keyword>
<keyword id="KW-0479">Metal-binding</keyword>
<keyword id="KW-0539">Nucleus</keyword>
<keyword id="KW-0597">Phosphoprotein</keyword>
<keyword id="KW-1185">Reference proteome</keyword>
<keyword id="KW-0804">Transcription</keyword>
<keyword id="KW-0805">Transcription regulation</keyword>
<keyword id="KW-0043">Tumor suppressor</keyword>
<keyword id="KW-0862">Zinc</keyword>
<dbReference type="EMBL" id="U57306">
    <property type="protein sequence ID" value="AAC60146.1"/>
    <property type="molecule type" value="mRNA"/>
</dbReference>
<dbReference type="EMBL" id="AF003949">
    <property type="protein sequence ID" value="AAD01195.1"/>
    <property type="molecule type" value="mRNA"/>
</dbReference>
<dbReference type="EMBL" id="AF003950">
    <property type="protein sequence ID" value="AAD01196.1"/>
    <property type="molecule type" value="mRNA"/>
</dbReference>
<dbReference type="RefSeq" id="NP_001098212.1">
    <property type="nucleotide sequence ID" value="NM_001104742.1"/>
</dbReference>
<dbReference type="RefSeq" id="XP_011485767.1">
    <property type="nucleotide sequence ID" value="XM_011487465.1"/>
</dbReference>
<dbReference type="SMR" id="P79820"/>
<dbReference type="FunCoup" id="P79820">
    <property type="interactions" value="1235"/>
</dbReference>
<dbReference type="STRING" id="8090.ENSORLP00000008031"/>
<dbReference type="Ensembl" id="ENSORLT00000008032.2">
    <property type="protein sequence ID" value="ENSORLP00000008031.2"/>
    <property type="gene ID" value="ENSORLG00000006390.2"/>
</dbReference>
<dbReference type="Ensembl" id="ENSORLT00020015819.1">
    <property type="protein sequence ID" value="ENSORLP00020009441.1"/>
    <property type="gene ID" value="ENSORLG00020010355.1"/>
</dbReference>
<dbReference type="GeneID" id="100049321"/>
<dbReference type="KEGG" id="ola:100049321"/>
<dbReference type="CTD" id="7157"/>
<dbReference type="eggNOG" id="ENOG502QVY3">
    <property type="taxonomic scope" value="Eukaryota"/>
</dbReference>
<dbReference type="GeneTree" id="ENSGT00950000183153"/>
<dbReference type="InParanoid" id="P79820"/>
<dbReference type="OrthoDB" id="5915660at2759"/>
<dbReference type="Proteomes" id="UP000001038">
    <property type="component" value="Chromosome 18"/>
</dbReference>
<dbReference type="Proteomes" id="UP000265180">
    <property type="component" value="Chromosome 18"/>
</dbReference>
<dbReference type="Proteomes" id="UP000265200">
    <property type="component" value="Unplaced"/>
</dbReference>
<dbReference type="Bgee" id="ENSORLG00000006390">
    <property type="expression patterns" value="Expressed in animal zygote and 14 other cell types or tissues"/>
</dbReference>
<dbReference type="GO" id="GO:0005737">
    <property type="term" value="C:cytoplasm"/>
    <property type="evidence" value="ECO:0000250"/>
    <property type="project" value="UniProtKB"/>
</dbReference>
<dbReference type="GO" id="GO:0005739">
    <property type="term" value="C:mitochondrion"/>
    <property type="evidence" value="ECO:0000250"/>
    <property type="project" value="UniProtKB"/>
</dbReference>
<dbReference type="GO" id="GO:0005634">
    <property type="term" value="C:nucleus"/>
    <property type="evidence" value="ECO:0000250"/>
    <property type="project" value="UniProtKB"/>
</dbReference>
<dbReference type="GO" id="GO:0000981">
    <property type="term" value="F:DNA-binding transcription factor activity, RNA polymerase II-specific"/>
    <property type="evidence" value="ECO:0000318"/>
    <property type="project" value="GO_Central"/>
</dbReference>
<dbReference type="GO" id="GO:0046872">
    <property type="term" value="F:metal ion binding"/>
    <property type="evidence" value="ECO:0007669"/>
    <property type="project" value="UniProtKB-KW"/>
</dbReference>
<dbReference type="GO" id="GO:0140693">
    <property type="term" value="F:molecular condensate scaffold activity"/>
    <property type="evidence" value="ECO:0000250"/>
    <property type="project" value="UniProtKB"/>
</dbReference>
<dbReference type="GO" id="GO:1990841">
    <property type="term" value="F:promoter-specific chromatin binding"/>
    <property type="evidence" value="ECO:0000250"/>
    <property type="project" value="UniProtKB"/>
</dbReference>
<dbReference type="GO" id="GO:0000978">
    <property type="term" value="F:RNA polymerase II cis-regulatory region sequence-specific DNA binding"/>
    <property type="evidence" value="ECO:0000318"/>
    <property type="project" value="GO_Central"/>
</dbReference>
<dbReference type="GO" id="GO:0006915">
    <property type="term" value="P:apoptotic process"/>
    <property type="evidence" value="ECO:0007669"/>
    <property type="project" value="UniProtKB-KW"/>
</dbReference>
<dbReference type="GO" id="GO:0006974">
    <property type="term" value="P:DNA damage response"/>
    <property type="evidence" value="ECO:0000250"/>
    <property type="project" value="UniProtKB"/>
</dbReference>
<dbReference type="GO" id="GO:0045944">
    <property type="term" value="P:positive regulation of transcription by RNA polymerase II"/>
    <property type="evidence" value="ECO:0000250"/>
    <property type="project" value="UniProtKB"/>
</dbReference>
<dbReference type="GO" id="GO:0051262">
    <property type="term" value="P:protein tetramerization"/>
    <property type="evidence" value="ECO:0007669"/>
    <property type="project" value="InterPro"/>
</dbReference>
<dbReference type="GO" id="GO:0006357">
    <property type="term" value="P:regulation of transcription by RNA polymerase II"/>
    <property type="evidence" value="ECO:0000318"/>
    <property type="project" value="GO_Central"/>
</dbReference>
<dbReference type="CDD" id="cd08367">
    <property type="entry name" value="P53"/>
    <property type="match status" value="1"/>
</dbReference>
<dbReference type="Gene3D" id="2.60.40.720">
    <property type="match status" value="1"/>
</dbReference>
<dbReference type="Gene3D" id="4.10.170.10">
    <property type="entry name" value="p53-like tetramerisation domain"/>
    <property type="match status" value="1"/>
</dbReference>
<dbReference type="InterPro" id="IPR008967">
    <property type="entry name" value="p53-like_TF_DNA-bd_sf"/>
</dbReference>
<dbReference type="InterPro" id="IPR012346">
    <property type="entry name" value="p53/RUNT-type_TF_DNA-bd_sf"/>
</dbReference>
<dbReference type="InterPro" id="IPR011615">
    <property type="entry name" value="p53_DNA-bd"/>
</dbReference>
<dbReference type="InterPro" id="IPR036674">
    <property type="entry name" value="p53_tetramer_sf"/>
</dbReference>
<dbReference type="InterPro" id="IPR010991">
    <property type="entry name" value="p53_tetrameristn"/>
</dbReference>
<dbReference type="InterPro" id="IPR002117">
    <property type="entry name" value="p53_tumour_suppressor"/>
</dbReference>
<dbReference type="PANTHER" id="PTHR11447">
    <property type="entry name" value="CELLULAR TUMOR ANTIGEN P53"/>
    <property type="match status" value="1"/>
</dbReference>
<dbReference type="PANTHER" id="PTHR11447:SF6">
    <property type="entry name" value="CELLULAR TUMOR ANTIGEN P53"/>
    <property type="match status" value="1"/>
</dbReference>
<dbReference type="Pfam" id="PF00870">
    <property type="entry name" value="P53"/>
    <property type="match status" value="1"/>
</dbReference>
<dbReference type="Pfam" id="PF07710">
    <property type="entry name" value="P53_tetramer"/>
    <property type="match status" value="1"/>
</dbReference>
<dbReference type="PRINTS" id="PR00386">
    <property type="entry name" value="P53SUPPRESSR"/>
</dbReference>
<dbReference type="SUPFAM" id="SSF47719">
    <property type="entry name" value="p53 tetramerization domain"/>
    <property type="match status" value="1"/>
</dbReference>
<dbReference type="SUPFAM" id="SSF49417">
    <property type="entry name" value="p53-like transcription factors"/>
    <property type="match status" value="1"/>
</dbReference>
<dbReference type="PROSITE" id="PS00348">
    <property type="entry name" value="P53"/>
    <property type="match status" value="1"/>
</dbReference>
<accession>P79820</accession>
<accession>Q9PSU7</accession>
<accession>Q9PSU8</accession>
<protein>
    <recommendedName>
        <fullName>Cellular tumor antigen p53</fullName>
    </recommendedName>
    <alternativeName>
        <fullName>Tumor suppressor p53</fullName>
    </alternativeName>
</protein>
<comment type="function">
    <text evidence="1">Multifunctional transcription factor that induces cell cycle arrest, DNA repair or apoptosis upon binding to its target DNA sequence. Acts as a tumor suppressor in many tumor types; induces growth arrest or apoptosis depending on the physiological circumstances and cell type. Negatively regulates cell division by controlling expression of a set of genes required for this process. One of the activated genes is an inhibitor of cyclin-dependent kinases. Apoptosis induction seems to be mediated either by stimulation of BAX and FAS antigen expression, or by repression of Bcl-2 expression (By similarity).</text>
</comment>
<comment type="cofactor">
    <cofactor evidence="1">
        <name>Zn(2+)</name>
        <dbReference type="ChEBI" id="CHEBI:29105"/>
    </cofactor>
    <text evidence="1">Binds 1 zinc ion per subunit.</text>
</comment>
<comment type="subunit">
    <text evidence="1">Binds DNA as a homotetramer.</text>
</comment>
<comment type="subcellular location">
    <subcellularLocation>
        <location evidence="1">Cytoplasm</location>
    </subcellularLocation>
    <subcellularLocation>
        <location evidence="1">Nucleus</location>
    </subcellularLocation>
</comment>
<comment type="domain">
    <text evidence="2">The N-terminal and C-terminal disordered regions undergo liquid-liquid phase separation (LLPS) following homotetramerization and activation. Post-translational modifications, such as phosphorylation or lactylation affect the ability to undergo LLPS.</text>
</comment>
<comment type="domain">
    <text evidence="2">The nuclear export signal acts as a transcriptional repression domain. The TADI and TADII motifs (residues 17 to 25 and 48 to 56) correspond both to 9aaTAD motifs which are transactivation domains present in a large number of yeast and animal transcription factors.</text>
</comment>
<comment type="similarity">
    <text evidence="5">Belongs to the p53 family.</text>
</comment>
<name>P53_ORYLA</name>
<evidence type="ECO:0000250" key="1"/>
<evidence type="ECO:0000250" key="2">
    <source>
        <dbReference type="UniProtKB" id="P04637"/>
    </source>
</evidence>
<evidence type="ECO:0000256" key="3">
    <source>
        <dbReference type="SAM" id="MobiDB-lite"/>
    </source>
</evidence>
<evidence type="ECO:0000269" key="4">
    <source ref="2"/>
</evidence>
<evidence type="ECO:0000305" key="5"/>
<proteinExistence type="evidence at transcript level"/>
<reference key="1">
    <citation type="journal article" date="1997" name="Gene">
        <title>Cloning of the p53 tumor suppressor gene from the Japanese medaka (Oryzias latipes) and evaluation of mutational hotspots in MNNG-exposed fish.</title>
        <authorList>
            <person name="Krause M.K."/>
            <person name="Rhodes L.D."/>
            <person name="van Beneden R.J."/>
        </authorList>
    </citation>
    <scope>NUCLEOTIDE SEQUENCE [MRNA]</scope>
    <source>
        <tissue>Liver</tissue>
    </source>
</reference>
<reference key="2">
    <citation type="submission" date="1997-05" db="EMBL/GenBank/DDBJ databases">
        <title>Isolation of cDNAs encoding the p53 tumor suppressor gene in the Japanese Medaka (Oryzias latipes).</title>
        <authorList>
            <person name="Atkinson D.N."/>
            <person name="Gumerlock P.H."/>
            <person name="Wong J.T.Y."/>
            <person name="Hsieh D.P.H."/>
        </authorList>
    </citation>
    <scope>NUCLEOTIDE SEQUENCE [MRNA]</scope>
    <scope>VARIANT THR-91</scope>
    <source>
        <strain>Himedaka</strain>
    </source>
</reference>
<gene>
    <name type="primary">tp53</name>
    <name type="synonym">p53</name>
</gene>
<sequence length="352" mass="39753">MDPVPDLPESQGSFQELWETVSYPPLETLSLPTVNEPTGSWVATGDMFLLDQDLSGTFDDKIFDIPIEPVPTNEVNPPPTTVPVTTDYPGSYELELRFQKSGTAKSVTSTYSETLNKLYCQLAKTSPIEVRVSKEPPKGAILRATAVYKKTEHVADVVRRCPHHQNEDSVEHRSHLIRVEGSQLAQYFEDPYTKRQSVTVPYEPPQPGSEMTTILLSYMCNSSCMGGMNRRPILTILTLETEGLVLGRRCFEVRICACPGRDRKTEEESRQKTQPKKRKVTPNTSSSKRKKSHSSGEEEDNREVFHFEVYGRERYEFLKKINDGLELLEKESKSKNKDSGMVPSSGKKLKSN</sequence>
<organism>
    <name type="scientific">Oryzias latipes</name>
    <name type="common">Japanese rice fish</name>
    <name type="synonym">Japanese killifish</name>
    <dbReference type="NCBI Taxonomy" id="8090"/>
    <lineage>
        <taxon>Eukaryota</taxon>
        <taxon>Metazoa</taxon>
        <taxon>Chordata</taxon>
        <taxon>Craniata</taxon>
        <taxon>Vertebrata</taxon>
        <taxon>Euteleostomi</taxon>
        <taxon>Actinopterygii</taxon>
        <taxon>Neopterygii</taxon>
        <taxon>Teleostei</taxon>
        <taxon>Neoteleostei</taxon>
        <taxon>Acanthomorphata</taxon>
        <taxon>Ovalentaria</taxon>
        <taxon>Atherinomorphae</taxon>
        <taxon>Beloniformes</taxon>
        <taxon>Adrianichthyidae</taxon>
        <taxon>Oryziinae</taxon>
        <taxon>Oryzias</taxon>
    </lineage>
</organism>